<evidence type="ECO:0000255" key="1">
    <source>
        <dbReference type="HAMAP-Rule" id="MF_01569"/>
    </source>
</evidence>
<feature type="chain" id="PRO_0000288337" description="Proline--tRNA ligase">
    <location>
        <begin position="1"/>
        <end position="565"/>
    </location>
</feature>
<accession>Q049U9</accession>
<dbReference type="EC" id="6.1.1.15" evidence="1"/>
<dbReference type="EMBL" id="CP000412">
    <property type="protein sequence ID" value="ABJ58773.1"/>
    <property type="molecule type" value="Genomic_DNA"/>
</dbReference>
<dbReference type="RefSeq" id="WP_003618583.1">
    <property type="nucleotide sequence ID" value="NC_008529.1"/>
</dbReference>
<dbReference type="SMR" id="Q049U9"/>
<dbReference type="KEGG" id="lbu:LBUL_1247"/>
<dbReference type="HOGENOM" id="CLU_016739_0_0_9"/>
<dbReference type="BioCyc" id="LDEL321956:LBUL_RS05855-MONOMER"/>
<dbReference type="GO" id="GO:0005829">
    <property type="term" value="C:cytosol"/>
    <property type="evidence" value="ECO:0007669"/>
    <property type="project" value="TreeGrafter"/>
</dbReference>
<dbReference type="GO" id="GO:0002161">
    <property type="term" value="F:aminoacyl-tRNA deacylase activity"/>
    <property type="evidence" value="ECO:0007669"/>
    <property type="project" value="InterPro"/>
</dbReference>
<dbReference type="GO" id="GO:0005524">
    <property type="term" value="F:ATP binding"/>
    <property type="evidence" value="ECO:0007669"/>
    <property type="project" value="UniProtKB-UniRule"/>
</dbReference>
<dbReference type="GO" id="GO:0140096">
    <property type="term" value="F:catalytic activity, acting on a protein"/>
    <property type="evidence" value="ECO:0007669"/>
    <property type="project" value="UniProtKB-ARBA"/>
</dbReference>
<dbReference type="GO" id="GO:0004827">
    <property type="term" value="F:proline-tRNA ligase activity"/>
    <property type="evidence" value="ECO:0007669"/>
    <property type="project" value="UniProtKB-UniRule"/>
</dbReference>
<dbReference type="GO" id="GO:0016740">
    <property type="term" value="F:transferase activity"/>
    <property type="evidence" value="ECO:0007669"/>
    <property type="project" value="UniProtKB-ARBA"/>
</dbReference>
<dbReference type="GO" id="GO:0006433">
    <property type="term" value="P:prolyl-tRNA aminoacylation"/>
    <property type="evidence" value="ECO:0007669"/>
    <property type="project" value="UniProtKB-UniRule"/>
</dbReference>
<dbReference type="CDD" id="cd04334">
    <property type="entry name" value="ProRS-INS"/>
    <property type="match status" value="1"/>
</dbReference>
<dbReference type="CDD" id="cd00861">
    <property type="entry name" value="ProRS_anticodon_short"/>
    <property type="match status" value="1"/>
</dbReference>
<dbReference type="CDD" id="cd00779">
    <property type="entry name" value="ProRS_core_prok"/>
    <property type="match status" value="1"/>
</dbReference>
<dbReference type="FunFam" id="3.40.50.800:FF:000011">
    <property type="entry name" value="Proline--tRNA ligase"/>
    <property type="match status" value="1"/>
</dbReference>
<dbReference type="Gene3D" id="3.40.50.800">
    <property type="entry name" value="Anticodon-binding domain"/>
    <property type="match status" value="1"/>
</dbReference>
<dbReference type="Gene3D" id="3.30.930.10">
    <property type="entry name" value="Bira Bifunctional Protein, Domain 2"/>
    <property type="match status" value="2"/>
</dbReference>
<dbReference type="HAMAP" id="MF_01569">
    <property type="entry name" value="Pro_tRNA_synth_type1"/>
    <property type="match status" value="1"/>
</dbReference>
<dbReference type="InterPro" id="IPR002314">
    <property type="entry name" value="aa-tRNA-synt_IIb"/>
</dbReference>
<dbReference type="InterPro" id="IPR006195">
    <property type="entry name" value="aa-tRNA-synth_II"/>
</dbReference>
<dbReference type="InterPro" id="IPR045864">
    <property type="entry name" value="aa-tRNA-synth_II/BPL/LPL"/>
</dbReference>
<dbReference type="InterPro" id="IPR004154">
    <property type="entry name" value="Anticodon-bd"/>
</dbReference>
<dbReference type="InterPro" id="IPR036621">
    <property type="entry name" value="Anticodon-bd_dom_sf"/>
</dbReference>
<dbReference type="InterPro" id="IPR002316">
    <property type="entry name" value="Pro-tRNA-ligase_IIa"/>
</dbReference>
<dbReference type="InterPro" id="IPR004500">
    <property type="entry name" value="Pro-tRNA-synth_IIa_bac-type"/>
</dbReference>
<dbReference type="InterPro" id="IPR023717">
    <property type="entry name" value="Pro-tRNA-Synthase_IIa_type1"/>
</dbReference>
<dbReference type="InterPro" id="IPR050062">
    <property type="entry name" value="Pro-tRNA_synthetase"/>
</dbReference>
<dbReference type="InterPro" id="IPR044140">
    <property type="entry name" value="ProRS_anticodon_short"/>
</dbReference>
<dbReference type="InterPro" id="IPR033730">
    <property type="entry name" value="ProRS_core_prok"/>
</dbReference>
<dbReference type="InterPro" id="IPR036754">
    <property type="entry name" value="YbaK/aa-tRNA-synt-asso_dom_sf"/>
</dbReference>
<dbReference type="InterPro" id="IPR007214">
    <property type="entry name" value="YbaK/aa-tRNA-synth-assoc-dom"/>
</dbReference>
<dbReference type="NCBIfam" id="NF006625">
    <property type="entry name" value="PRK09194.1"/>
    <property type="match status" value="1"/>
</dbReference>
<dbReference type="NCBIfam" id="TIGR00409">
    <property type="entry name" value="proS_fam_II"/>
    <property type="match status" value="1"/>
</dbReference>
<dbReference type="PANTHER" id="PTHR42753">
    <property type="entry name" value="MITOCHONDRIAL RIBOSOME PROTEIN L39/PROLYL-TRNA LIGASE FAMILY MEMBER"/>
    <property type="match status" value="1"/>
</dbReference>
<dbReference type="PANTHER" id="PTHR42753:SF2">
    <property type="entry name" value="PROLINE--TRNA LIGASE"/>
    <property type="match status" value="1"/>
</dbReference>
<dbReference type="Pfam" id="PF03129">
    <property type="entry name" value="HGTP_anticodon"/>
    <property type="match status" value="1"/>
</dbReference>
<dbReference type="Pfam" id="PF00587">
    <property type="entry name" value="tRNA-synt_2b"/>
    <property type="match status" value="1"/>
</dbReference>
<dbReference type="Pfam" id="PF04073">
    <property type="entry name" value="tRNA_edit"/>
    <property type="match status" value="1"/>
</dbReference>
<dbReference type="PRINTS" id="PR01046">
    <property type="entry name" value="TRNASYNTHPRO"/>
</dbReference>
<dbReference type="SUPFAM" id="SSF52954">
    <property type="entry name" value="Class II aaRS ABD-related"/>
    <property type="match status" value="1"/>
</dbReference>
<dbReference type="SUPFAM" id="SSF55681">
    <property type="entry name" value="Class II aaRS and biotin synthetases"/>
    <property type="match status" value="1"/>
</dbReference>
<dbReference type="SUPFAM" id="SSF55826">
    <property type="entry name" value="YbaK/ProRS associated domain"/>
    <property type="match status" value="1"/>
</dbReference>
<dbReference type="PROSITE" id="PS50862">
    <property type="entry name" value="AA_TRNA_LIGASE_II"/>
    <property type="match status" value="1"/>
</dbReference>
<proteinExistence type="inferred from homology"/>
<keyword id="KW-0030">Aminoacyl-tRNA synthetase</keyword>
<keyword id="KW-0067">ATP-binding</keyword>
<keyword id="KW-0963">Cytoplasm</keyword>
<keyword id="KW-0436">Ligase</keyword>
<keyword id="KW-0547">Nucleotide-binding</keyword>
<keyword id="KW-0648">Protein biosynthesis</keyword>
<sequence>MRQSIFFMPTLKETPADAVAKSHQVMLRGGYIRQVTAGVYSYLPLGYKVLRKTEKIIEEEMANAGVVEMIMPHMLPASMWEESGRLPKYGPEMFRLKDRHGREMLLGPTHEETFTDVVAKSLKSYKQMPLQLYQIQTKFRDENRPRFGLLRGREFVMLDGYSFAASQEQLDKQFDDEKAAYLKIFKRTGVEVRPVIADSGTMGGKNSIEFQAPAAVGEDTIATNASGTYAANLEMAVSVDTFKQEPEELKAMEKVATPGCDSIDKLAEFLQVPATRIVKSVLYIVDEKKKVLVLIRADKEVNEVKLTHLLDCDSLRVAETSDLEELTGAGKGGVGPVNADWADEIVADKTVKGLYNVVVGAGESDAQFINANLDRDFKADRFADLRVANEGEPDPVDHEPLKFTTSIEVGHIFKLGTYYTETMGAKFLDQNGKSQPVIMGSYGIGVTRLLSAVVEQHATENGVAWPKEIAPFGIHIIQMKMKDEIQSKLAEDLEAKFAKYDVLYDDRNERPGVKFNDADLVGAPIRITVGRDAADGIVEVKRPGDDQAQKLAVADLEDFIANELD</sequence>
<organism>
    <name type="scientific">Lactobacillus delbrueckii subsp. bulgaricus (strain ATCC BAA-365 / Lb-18)</name>
    <dbReference type="NCBI Taxonomy" id="321956"/>
    <lineage>
        <taxon>Bacteria</taxon>
        <taxon>Bacillati</taxon>
        <taxon>Bacillota</taxon>
        <taxon>Bacilli</taxon>
        <taxon>Lactobacillales</taxon>
        <taxon>Lactobacillaceae</taxon>
        <taxon>Lactobacillus</taxon>
    </lineage>
</organism>
<name>SYP_LACDB</name>
<reference key="1">
    <citation type="journal article" date="2006" name="Proc. Natl. Acad. Sci. U.S.A.">
        <title>Comparative genomics of the lactic acid bacteria.</title>
        <authorList>
            <person name="Makarova K.S."/>
            <person name="Slesarev A."/>
            <person name="Wolf Y.I."/>
            <person name="Sorokin A."/>
            <person name="Mirkin B."/>
            <person name="Koonin E.V."/>
            <person name="Pavlov A."/>
            <person name="Pavlova N."/>
            <person name="Karamychev V."/>
            <person name="Polouchine N."/>
            <person name="Shakhova V."/>
            <person name="Grigoriev I."/>
            <person name="Lou Y."/>
            <person name="Rohksar D."/>
            <person name="Lucas S."/>
            <person name="Huang K."/>
            <person name="Goodstein D.M."/>
            <person name="Hawkins T."/>
            <person name="Plengvidhya V."/>
            <person name="Welker D."/>
            <person name="Hughes J."/>
            <person name="Goh Y."/>
            <person name="Benson A."/>
            <person name="Baldwin K."/>
            <person name="Lee J.-H."/>
            <person name="Diaz-Muniz I."/>
            <person name="Dosti B."/>
            <person name="Smeianov V."/>
            <person name="Wechter W."/>
            <person name="Barabote R."/>
            <person name="Lorca G."/>
            <person name="Altermann E."/>
            <person name="Barrangou R."/>
            <person name="Ganesan B."/>
            <person name="Xie Y."/>
            <person name="Rawsthorne H."/>
            <person name="Tamir D."/>
            <person name="Parker C."/>
            <person name="Breidt F."/>
            <person name="Broadbent J.R."/>
            <person name="Hutkins R."/>
            <person name="O'Sullivan D."/>
            <person name="Steele J."/>
            <person name="Unlu G."/>
            <person name="Saier M.H. Jr."/>
            <person name="Klaenhammer T."/>
            <person name="Richardson P."/>
            <person name="Kozyavkin S."/>
            <person name="Weimer B.C."/>
            <person name="Mills D.A."/>
        </authorList>
    </citation>
    <scope>NUCLEOTIDE SEQUENCE [LARGE SCALE GENOMIC DNA]</scope>
    <source>
        <strain>ATCC BAA-365 / Lb-18</strain>
    </source>
</reference>
<gene>
    <name evidence="1" type="primary">proS</name>
    <name type="ordered locus">LBUL_1247</name>
</gene>
<protein>
    <recommendedName>
        <fullName evidence="1">Proline--tRNA ligase</fullName>
        <ecNumber evidence="1">6.1.1.15</ecNumber>
    </recommendedName>
    <alternativeName>
        <fullName evidence="1">Prolyl-tRNA synthetase</fullName>
        <shortName evidence="1">ProRS</shortName>
    </alternativeName>
</protein>
<comment type="function">
    <text evidence="1">Catalyzes the attachment of proline to tRNA(Pro) in a two-step reaction: proline is first activated by ATP to form Pro-AMP and then transferred to the acceptor end of tRNA(Pro). As ProRS can inadvertently accommodate and process non-cognate amino acids such as alanine and cysteine, to avoid such errors it has two additional distinct editing activities against alanine. One activity is designated as 'pretransfer' editing and involves the tRNA(Pro)-independent hydrolysis of activated Ala-AMP. The other activity is designated 'posttransfer' editing and involves deacylation of mischarged Ala-tRNA(Pro). The misacylated Cys-tRNA(Pro) is not edited by ProRS.</text>
</comment>
<comment type="catalytic activity">
    <reaction evidence="1">
        <text>tRNA(Pro) + L-proline + ATP = L-prolyl-tRNA(Pro) + AMP + diphosphate</text>
        <dbReference type="Rhea" id="RHEA:14305"/>
        <dbReference type="Rhea" id="RHEA-COMP:9700"/>
        <dbReference type="Rhea" id="RHEA-COMP:9702"/>
        <dbReference type="ChEBI" id="CHEBI:30616"/>
        <dbReference type="ChEBI" id="CHEBI:33019"/>
        <dbReference type="ChEBI" id="CHEBI:60039"/>
        <dbReference type="ChEBI" id="CHEBI:78442"/>
        <dbReference type="ChEBI" id="CHEBI:78532"/>
        <dbReference type="ChEBI" id="CHEBI:456215"/>
        <dbReference type="EC" id="6.1.1.15"/>
    </reaction>
</comment>
<comment type="subunit">
    <text evidence="1">Homodimer.</text>
</comment>
<comment type="subcellular location">
    <subcellularLocation>
        <location evidence="1">Cytoplasm</location>
    </subcellularLocation>
</comment>
<comment type="domain">
    <text evidence="1">Consists of three domains: the N-terminal catalytic domain, the editing domain and the C-terminal anticodon-binding domain.</text>
</comment>
<comment type="similarity">
    <text evidence="1">Belongs to the class-II aminoacyl-tRNA synthetase family. ProS type 1 subfamily.</text>
</comment>